<keyword id="KW-0479">Metal-binding</keyword>
<keyword id="KW-1185">Reference proteome</keyword>
<keyword id="KW-0677">Repeat</keyword>
<keyword id="KW-0862">Zinc</keyword>
<keyword id="KW-0863">Zinc-finger</keyword>
<organism>
    <name type="scientific">Mus musculus</name>
    <name type="common">Mouse</name>
    <dbReference type="NCBI Taxonomy" id="10090"/>
    <lineage>
        <taxon>Eukaryota</taxon>
        <taxon>Metazoa</taxon>
        <taxon>Chordata</taxon>
        <taxon>Craniata</taxon>
        <taxon>Vertebrata</taxon>
        <taxon>Euteleostomi</taxon>
        <taxon>Mammalia</taxon>
        <taxon>Eutheria</taxon>
        <taxon>Euarchontoglires</taxon>
        <taxon>Glires</taxon>
        <taxon>Rodentia</taxon>
        <taxon>Myomorpha</taxon>
        <taxon>Muroidea</taxon>
        <taxon>Muridae</taxon>
        <taxon>Murinae</taxon>
        <taxon>Mus</taxon>
        <taxon>Mus</taxon>
    </lineage>
</organism>
<proteinExistence type="evidence at transcript level"/>
<sequence>MGEAQLLVEDGNQKLFPCEVCGRCFATDVLERHGPICKKVFNKKRKPFNSLKQRLQGTDIPTVGKSPQPKVQPVRKSNWRQQHEDFINTIRSAKQFTLAIKEGRPLPPPPRPTSNPDYIQCPYCMRRFNETAAQRHINFCKNQTSRPVFDPIQMAARLVSRAQCKAQASLKK</sequence>
<name>ZC21B_MOUSE</name>
<evidence type="ECO:0000255" key="1">
    <source>
        <dbReference type="PROSITE-ProRule" id="PRU01371"/>
    </source>
</evidence>
<evidence type="ECO:0000305" key="2"/>
<dbReference type="EMBL" id="AK015837">
    <property type="protein sequence ID" value="BAB29995.1"/>
    <property type="molecule type" value="mRNA"/>
</dbReference>
<dbReference type="CCDS" id="CCDS48502.1"/>
<dbReference type="FunCoup" id="Q9D534">
    <property type="interactions" value="7"/>
</dbReference>
<dbReference type="STRING" id="10090.ENSMUSP00000019954"/>
<dbReference type="GlyGen" id="Q9D534">
    <property type="glycosylation" value="1 site, 1 O-linked glycan (1 site)"/>
</dbReference>
<dbReference type="iPTMnet" id="Q9D534"/>
<dbReference type="PhosphoSitePlus" id="Q9D534"/>
<dbReference type="PaxDb" id="10090-ENSMUSP00000019954"/>
<dbReference type="ProteomicsDB" id="274972"/>
<dbReference type="AGR" id="MGI:1922372"/>
<dbReference type="MGI" id="MGI:1922372">
    <property type="gene designation" value="Zc2hc1b"/>
</dbReference>
<dbReference type="eggNOG" id="KOG3940">
    <property type="taxonomic scope" value="Eukaryota"/>
</dbReference>
<dbReference type="InParanoid" id="Q9D534"/>
<dbReference type="PhylomeDB" id="Q9D534"/>
<dbReference type="ChiTaRS" id="Zc2hc1b">
    <property type="organism name" value="mouse"/>
</dbReference>
<dbReference type="PRO" id="PR:Q9D534"/>
<dbReference type="Proteomes" id="UP000000589">
    <property type="component" value="Unplaced"/>
</dbReference>
<dbReference type="RNAct" id="Q9D534">
    <property type="molecule type" value="protein"/>
</dbReference>
<dbReference type="GO" id="GO:0008270">
    <property type="term" value="F:zinc ion binding"/>
    <property type="evidence" value="ECO:0007669"/>
    <property type="project" value="UniProtKB-KW"/>
</dbReference>
<dbReference type="Gene3D" id="3.30.160.60">
    <property type="entry name" value="Classic Zinc Finger"/>
    <property type="match status" value="1"/>
</dbReference>
<dbReference type="InterPro" id="IPR026319">
    <property type="entry name" value="ZC2HC1A/B-like"/>
</dbReference>
<dbReference type="InterPro" id="IPR049899">
    <property type="entry name" value="Znf_C2HC_C3H"/>
</dbReference>
<dbReference type="PANTHER" id="PTHR13555">
    <property type="entry name" value="C2H2 ZINC FINGER CGI-62-RELATED"/>
    <property type="match status" value="1"/>
</dbReference>
<dbReference type="PANTHER" id="PTHR13555:SF36">
    <property type="entry name" value="ZINC FINGER C2HC DOMAIN-CONTAINING PROTEIN 1B"/>
    <property type="match status" value="1"/>
</dbReference>
<dbReference type="Pfam" id="PF13913">
    <property type="entry name" value="zf-C2HC_2"/>
    <property type="match status" value="2"/>
</dbReference>
<dbReference type="PROSITE" id="PS52027">
    <property type="entry name" value="ZF_C2HC_C3H"/>
    <property type="match status" value="2"/>
</dbReference>
<feature type="chain" id="PRO_0000280253" description="Zinc finger C2HC domain-containing protein 1B">
    <location>
        <begin position="1"/>
        <end position="172"/>
    </location>
</feature>
<feature type="zinc finger region" description="C2HC/C3H-type 1" evidence="1">
    <location>
        <begin position="14"/>
        <end position="43"/>
    </location>
</feature>
<feature type="zinc finger region" description="C2HC/C3H-type 2" evidence="1">
    <location>
        <begin position="117"/>
        <end position="146"/>
    </location>
</feature>
<feature type="binding site" evidence="1">
    <location>
        <position position="18"/>
    </location>
    <ligand>
        <name>Zn(2+)</name>
        <dbReference type="ChEBI" id="CHEBI:29105"/>
        <label>1</label>
    </ligand>
</feature>
<feature type="binding site" evidence="1">
    <location>
        <position position="21"/>
    </location>
    <ligand>
        <name>Zn(2+)</name>
        <dbReference type="ChEBI" id="CHEBI:29105"/>
        <label>1</label>
    </ligand>
</feature>
<feature type="binding site" evidence="1">
    <location>
        <position position="33"/>
    </location>
    <ligand>
        <name>Zn(2+)</name>
        <dbReference type="ChEBI" id="CHEBI:29105"/>
        <label>1</label>
    </ligand>
</feature>
<feature type="binding site" evidence="1">
    <location>
        <position position="37"/>
    </location>
    <ligand>
        <name>Zn(2+)</name>
        <dbReference type="ChEBI" id="CHEBI:29105"/>
        <label>1</label>
    </ligand>
</feature>
<feature type="binding site" evidence="1">
    <location>
        <position position="121"/>
    </location>
    <ligand>
        <name>Zn(2+)</name>
        <dbReference type="ChEBI" id="CHEBI:29105"/>
        <label>2</label>
    </ligand>
</feature>
<feature type="binding site" evidence="1">
    <location>
        <position position="124"/>
    </location>
    <ligand>
        <name>Zn(2+)</name>
        <dbReference type="ChEBI" id="CHEBI:29105"/>
        <label>2</label>
    </ligand>
</feature>
<feature type="binding site" evidence="1">
    <location>
        <position position="136"/>
    </location>
    <ligand>
        <name>Zn(2+)</name>
        <dbReference type="ChEBI" id="CHEBI:29105"/>
        <label>2</label>
    </ligand>
</feature>
<feature type="binding site" evidence="1">
    <location>
        <position position="140"/>
    </location>
    <ligand>
        <name>Zn(2+)</name>
        <dbReference type="ChEBI" id="CHEBI:29105"/>
        <label>2</label>
    </ligand>
</feature>
<gene>
    <name type="primary">Zc2hc1b</name>
    <name type="synonym">Fam164b</name>
</gene>
<protein>
    <recommendedName>
        <fullName>Zinc finger C2HC domain-containing protein 1B</fullName>
    </recommendedName>
</protein>
<reference key="1">
    <citation type="journal article" date="2005" name="Science">
        <title>The transcriptional landscape of the mammalian genome.</title>
        <authorList>
            <person name="Carninci P."/>
            <person name="Kasukawa T."/>
            <person name="Katayama S."/>
            <person name="Gough J."/>
            <person name="Frith M.C."/>
            <person name="Maeda N."/>
            <person name="Oyama R."/>
            <person name="Ravasi T."/>
            <person name="Lenhard B."/>
            <person name="Wells C."/>
            <person name="Kodzius R."/>
            <person name="Shimokawa K."/>
            <person name="Bajic V.B."/>
            <person name="Brenner S.E."/>
            <person name="Batalov S."/>
            <person name="Forrest A.R."/>
            <person name="Zavolan M."/>
            <person name="Davis M.J."/>
            <person name="Wilming L.G."/>
            <person name="Aidinis V."/>
            <person name="Allen J.E."/>
            <person name="Ambesi-Impiombato A."/>
            <person name="Apweiler R."/>
            <person name="Aturaliya R.N."/>
            <person name="Bailey T.L."/>
            <person name="Bansal M."/>
            <person name="Baxter L."/>
            <person name="Beisel K.W."/>
            <person name="Bersano T."/>
            <person name="Bono H."/>
            <person name="Chalk A.M."/>
            <person name="Chiu K.P."/>
            <person name="Choudhary V."/>
            <person name="Christoffels A."/>
            <person name="Clutterbuck D.R."/>
            <person name="Crowe M.L."/>
            <person name="Dalla E."/>
            <person name="Dalrymple B.P."/>
            <person name="de Bono B."/>
            <person name="Della Gatta G."/>
            <person name="di Bernardo D."/>
            <person name="Down T."/>
            <person name="Engstrom P."/>
            <person name="Fagiolini M."/>
            <person name="Faulkner G."/>
            <person name="Fletcher C.F."/>
            <person name="Fukushima T."/>
            <person name="Furuno M."/>
            <person name="Futaki S."/>
            <person name="Gariboldi M."/>
            <person name="Georgii-Hemming P."/>
            <person name="Gingeras T.R."/>
            <person name="Gojobori T."/>
            <person name="Green R.E."/>
            <person name="Gustincich S."/>
            <person name="Harbers M."/>
            <person name="Hayashi Y."/>
            <person name="Hensch T.K."/>
            <person name="Hirokawa N."/>
            <person name="Hill D."/>
            <person name="Huminiecki L."/>
            <person name="Iacono M."/>
            <person name="Ikeo K."/>
            <person name="Iwama A."/>
            <person name="Ishikawa T."/>
            <person name="Jakt M."/>
            <person name="Kanapin A."/>
            <person name="Katoh M."/>
            <person name="Kawasawa Y."/>
            <person name="Kelso J."/>
            <person name="Kitamura H."/>
            <person name="Kitano H."/>
            <person name="Kollias G."/>
            <person name="Krishnan S.P."/>
            <person name="Kruger A."/>
            <person name="Kummerfeld S.K."/>
            <person name="Kurochkin I.V."/>
            <person name="Lareau L.F."/>
            <person name="Lazarevic D."/>
            <person name="Lipovich L."/>
            <person name="Liu J."/>
            <person name="Liuni S."/>
            <person name="McWilliam S."/>
            <person name="Madan Babu M."/>
            <person name="Madera M."/>
            <person name="Marchionni L."/>
            <person name="Matsuda H."/>
            <person name="Matsuzawa S."/>
            <person name="Miki H."/>
            <person name="Mignone F."/>
            <person name="Miyake S."/>
            <person name="Morris K."/>
            <person name="Mottagui-Tabar S."/>
            <person name="Mulder N."/>
            <person name="Nakano N."/>
            <person name="Nakauchi H."/>
            <person name="Ng P."/>
            <person name="Nilsson R."/>
            <person name="Nishiguchi S."/>
            <person name="Nishikawa S."/>
            <person name="Nori F."/>
            <person name="Ohara O."/>
            <person name="Okazaki Y."/>
            <person name="Orlando V."/>
            <person name="Pang K.C."/>
            <person name="Pavan W.J."/>
            <person name="Pavesi G."/>
            <person name="Pesole G."/>
            <person name="Petrovsky N."/>
            <person name="Piazza S."/>
            <person name="Reed J."/>
            <person name="Reid J.F."/>
            <person name="Ring B.Z."/>
            <person name="Ringwald M."/>
            <person name="Rost B."/>
            <person name="Ruan Y."/>
            <person name="Salzberg S.L."/>
            <person name="Sandelin A."/>
            <person name="Schneider C."/>
            <person name="Schoenbach C."/>
            <person name="Sekiguchi K."/>
            <person name="Semple C.A."/>
            <person name="Seno S."/>
            <person name="Sessa L."/>
            <person name="Sheng Y."/>
            <person name="Shibata Y."/>
            <person name="Shimada H."/>
            <person name="Shimada K."/>
            <person name="Silva D."/>
            <person name="Sinclair B."/>
            <person name="Sperling S."/>
            <person name="Stupka E."/>
            <person name="Sugiura K."/>
            <person name="Sultana R."/>
            <person name="Takenaka Y."/>
            <person name="Taki K."/>
            <person name="Tammoja K."/>
            <person name="Tan S.L."/>
            <person name="Tang S."/>
            <person name="Taylor M.S."/>
            <person name="Tegner J."/>
            <person name="Teichmann S.A."/>
            <person name="Ueda H.R."/>
            <person name="van Nimwegen E."/>
            <person name="Verardo R."/>
            <person name="Wei C.L."/>
            <person name="Yagi K."/>
            <person name="Yamanishi H."/>
            <person name="Zabarovsky E."/>
            <person name="Zhu S."/>
            <person name="Zimmer A."/>
            <person name="Hide W."/>
            <person name="Bult C."/>
            <person name="Grimmond S.M."/>
            <person name="Teasdale R.D."/>
            <person name="Liu E.T."/>
            <person name="Brusic V."/>
            <person name="Quackenbush J."/>
            <person name="Wahlestedt C."/>
            <person name="Mattick J.S."/>
            <person name="Hume D.A."/>
            <person name="Kai C."/>
            <person name="Sasaki D."/>
            <person name="Tomaru Y."/>
            <person name="Fukuda S."/>
            <person name="Kanamori-Katayama M."/>
            <person name="Suzuki M."/>
            <person name="Aoki J."/>
            <person name="Arakawa T."/>
            <person name="Iida J."/>
            <person name="Imamura K."/>
            <person name="Itoh M."/>
            <person name="Kato T."/>
            <person name="Kawaji H."/>
            <person name="Kawagashira N."/>
            <person name="Kawashima T."/>
            <person name="Kojima M."/>
            <person name="Kondo S."/>
            <person name="Konno H."/>
            <person name="Nakano K."/>
            <person name="Ninomiya N."/>
            <person name="Nishio T."/>
            <person name="Okada M."/>
            <person name="Plessy C."/>
            <person name="Shibata K."/>
            <person name="Shiraki T."/>
            <person name="Suzuki S."/>
            <person name="Tagami M."/>
            <person name="Waki K."/>
            <person name="Watahiki A."/>
            <person name="Okamura-Oho Y."/>
            <person name="Suzuki H."/>
            <person name="Kawai J."/>
            <person name="Hayashizaki Y."/>
        </authorList>
    </citation>
    <scope>NUCLEOTIDE SEQUENCE [LARGE SCALE MRNA]</scope>
    <source>
        <strain>C57BL/6J</strain>
        <tissue>Testis</tissue>
    </source>
</reference>
<accession>Q9D534</accession>
<comment type="cofactor">
    <cofactor evidence="1">
        <name>Zn(2+)</name>
        <dbReference type="ChEBI" id="CHEBI:29105"/>
    </cofactor>
</comment>
<comment type="similarity">
    <text evidence="2">Belongs to the ZC2HC1 family.</text>
</comment>